<accession>C0HM70</accession>
<proteinExistence type="evidence at protein level"/>
<reference evidence="4" key="1">
    <citation type="journal article" date="2022" name="J. Nat. Prod.">
        <title>Newly Discovered Peptides from the Coral Heliofungia actiniformis Show Structural and Functional Diversity.</title>
        <authorList>
            <person name="Schmidt C.A."/>
            <person name="Cooke I."/>
            <person name="Wilson D.T."/>
            <person name="Miller D.J."/>
            <person name="Peigneur S."/>
            <person name="Tytgat J."/>
            <person name="Field M."/>
            <person name="Takjoo R."/>
            <person name="Smout M.J."/>
            <person name="Loukas A."/>
            <person name="Daly N.L."/>
        </authorList>
    </citation>
    <scope>PROTEIN SEQUENCE</scope>
    <scope>STRUCTURE BY NMR</scope>
    <scope>FUNCTION</scope>
    <scope>SUBCELLULAR LOCATION</scope>
    <scope>TISSUE SPECIFICITY</scope>
    <scope>MASS SPECTROMETRY</scope>
    <scope>DISULFIDE BONDS</scope>
</reference>
<protein>
    <recommendedName>
        <fullName>Peptide Hact-SCRiP1</fullName>
    </recommendedName>
</protein>
<evidence type="ECO:0000269" key="1">
    <source>
    </source>
</evidence>
<evidence type="ECO:0000305" key="2"/>
<evidence type="ECO:0000305" key="3">
    <source>
    </source>
</evidence>
<evidence type="ECO:0000312" key="4">
    <source>
        <dbReference type="PDB" id="7LX4"/>
    </source>
</evidence>
<organism>
    <name type="scientific">Heliofungia actiniformis</name>
    <name type="common">Mushroom coral</name>
    <name type="synonym">Fungia actiniformis</name>
    <dbReference type="NCBI Taxonomy" id="75303"/>
    <lineage>
        <taxon>Eukaryota</taxon>
        <taxon>Metazoa</taxon>
        <taxon>Cnidaria</taxon>
        <taxon>Anthozoa</taxon>
        <taxon>Hexacorallia</taxon>
        <taxon>Scleractinia</taxon>
        <taxon>Fungiina</taxon>
        <taxon>Fungiidae</taxon>
        <taxon>Heliofungia</taxon>
    </lineage>
</organism>
<comment type="function">
    <text evidence="1 2">Peptide with unknown function (Probable). Does not exhibit any effect on human ion channel TRPV1 in a Xenopus laevis oocytes assay (PubMed:35829679).</text>
</comment>
<comment type="subcellular location">
    <subcellularLocation>
        <location evidence="1">Nematocyst</location>
    </subcellularLocation>
    <subcellularLocation>
        <location evidence="3">Secreted</location>
    </subcellularLocation>
</comment>
<comment type="tissue specificity">
    <text evidence="1">Expressed in tentacles.</text>
</comment>
<comment type="mass spectrometry" mass="4568.1523" method="MALDI" evidence="1"/>
<name>SCRP1_HELAT</name>
<feature type="chain" id="PRO_0000458193" description="Peptide Hact-SCRiP1">
    <location>
        <begin position="1"/>
        <end position="41"/>
    </location>
</feature>
<feature type="disulfide bond" evidence="1">
    <location>
        <begin position="5"/>
        <end position="37"/>
    </location>
</feature>
<feature type="disulfide bond" evidence="1">
    <location>
        <begin position="12"/>
        <end position="31"/>
    </location>
</feature>
<feature type="disulfide bond" evidence="1">
    <location>
        <begin position="19"/>
        <end position="38"/>
    </location>
</feature>
<feature type="disulfide bond" evidence="1">
    <location>
        <begin position="26"/>
        <end position="39"/>
    </location>
</feature>
<dbReference type="PDB" id="7LX4">
    <property type="method" value="NMR"/>
    <property type="chains" value="A=1-41"/>
</dbReference>
<dbReference type="PDBsum" id="7LX4"/>
<dbReference type="SMR" id="C0HM70"/>
<dbReference type="GO" id="GO:0005576">
    <property type="term" value="C:extracellular region"/>
    <property type="evidence" value="ECO:0007669"/>
    <property type="project" value="UniProtKB-SubCell"/>
</dbReference>
<dbReference type="GO" id="GO:0042151">
    <property type="term" value="C:nematocyst"/>
    <property type="evidence" value="ECO:0007669"/>
    <property type="project" value="UniProtKB-SubCell"/>
</dbReference>
<keyword id="KW-0002">3D-structure</keyword>
<keyword id="KW-0903">Direct protein sequencing</keyword>
<keyword id="KW-1015">Disulfide bond</keyword>
<keyword id="KW-0166">Nematocyst</keyword>
<keyword id="KW-0964">Secreted</keyword>
<sequence length="41" mass="4594">QSEFCGHDVGECVPPKLVCRPPTHECLHFPCPGYLKCCCYP</sequence>